<comment type="function">
    <text evidence="1">IF-3 binds to the 30S ribosomal subunit and shifts the equilibrium between 70S ribosomes and their 50S and 30S subunits in favor of the free subunits, thus enhancing the availability of 30S subunits on which protein synthesis initiation begins.</text>
</comment>
<comment type="subunit">
    <text evidence="1">Monomer.</text>
</comment>
<comment type="subcellular location">
    <subcellularLocation>
        <location evidence="1">Cytoplasm</location>
    </subcellularLocation>
</comment>
<comment type="similarity">
    <text evidence="1">Belongs to the IF-3 family.</text>
</comment>
<feature type="chain" id="PRO_0000177594" description="Translation initiation factor IF-3">
    <location>
        <begin position="1"/>
        <end position="182"/>
    </location>
</feature>
<sequence>MTVQVAVALTKKTQQEQPMINERIHFPRVRVVDTDGSQLGIMSSQEAIAIAREKELDLVLVSDKADPPVCKIIDYGKFRFEQEKKAREARKKQHTSDVKEVKMRYKIEEHDYNVCINRAERFLKAGDKVKATVTFRGREIQHSHLAEELLNRMANDLQAVAEVQQAPKQEGRNMIMFLAPKR</sequence>
<dbReference type="EMBL" id="BA000039">
    <property type="protein sequence ID" value="BAC09172.1"/>
    <property type="molecule type" value="Genomic_DNA"/>
</dbReference>
<dbReference type="RefSeq" id="NP_682410.1">
    <property type="nucleotide sequence ID" value="NC_004113.1"/>
</dbReference>
<dbReference type="RefSeq" id="WP_011057459.1">
    <property type="nucleotide sequence ID" value="NC_004113.1"/>
</dbReference>
<dbReference type="SMR" id="Q8DIG8"/>
<dbReference type="STRING" id="197221.gene:10748222"/>
<dbReference type="EnsemblBacteria" id="BAC09172">
    <property type="protein sequence ID" value="BAC09172"/>
    <property type="gene ID" value="BAC09172"/>
</dbReference>
<dbReference type="KEGG" id="tel:tlr1620"/>
<dbReference type="PATRIC" id="fig|197221.4.peg.1698"/>
<dbReference type="eggNOG" id="COG0290">
    <property type="taxonomic scope" value="Bacteria"/>
</dbReference>
<dbReference type="Proteomes" id="UP000000440">
    <property type="component" value="Chromosome"/>
</dbReference>
<dbReference type="GO" id="GO:0005829">
    <property type="term" value="C:cytosol"/>
    <property type="evidence" value="ECO:0007669"/>
    <property type="project" value="TreeGrafter"/>
</dbReference>
<dbReference type="GO" id="GO:0016020">
    <property type="term" value="C:membrane"/>
    <property type="evidence" value="ECO:0007669"/>
    <property type="project" value="TreeGrafter"/>
</dbReference>
<dbReference type="GO" id="GO:0043022">
    <property type="term" value="F:ribosome binding"/>
    <property type="evidence" value="ECO:0007669"/>
    <property type="project" value="TreeGrafter"/>
</dbReference>
<dbReference type="GO" id="GO:0003743">
    <property type="term" value="F:translation initiation factor activity"/>
    <property type="evidence" value="ECO:0007669"/>
    <property type="project" value="UniProtKB-UniRule"/>
</dbReference>
<dbReference type="GO" id="GO:0032790">
    <property type="term" value="P:ribosome disassembly"/>
    <property type="evidence" value="ECO:0007669"/>
    <property type="project" value="TreeGrafter"/>
</dbReference>
<dbReference type="FunFam" id="3.10.20.80:FF:000001">
    <property type="entry name" value="Translation initiation factor IF-3"/>
    <property type="match status" value="1"/>
</dbReference>
<dbReference type="FunFam" id="3.30.110.10:FF:000001">
    <property type="entry name" value="Translation initiation factor IF-3"/>
    <property type="match status" value="1"/>
</dbReference>
<dbReference type="Gene3D" id="3.30.110.10">
    <property type="entry name" value="Translation initiation factor 3 (IF-3), C-terminal domain"/>
    <property type="match status" value="1"/>
</dbReference>
<dbReference type="Gene3D" id="3.10.20.80">
    <property type="entry name" value="Translation initiation factor 3 (IF-3), N-terminal domain"/>
    <property type="match status" value="1"/>
</dbReference>
<dbReference type="HAMAP" id="MF_00080">
    <property type="entry name" value="IF_3"/>
    <property type="match status" value="1"/>
</dbReference>
<dbReference type="InterPro" id="IPR036788">
    <property type="entry name" value="T_IF-3_C_sf"/>
</dbReference>
<dbReference type="InterPro" id="IPR036787">
    <property type="entry name" value="T_IF-3_N_sf"/>
</dbReference>
<dbReference type="InterPro" id="IPR019813">
    <property type="entry name" value="Translation_initiation_fac3_CS"/>
</dbReference>
<dbReference type="InterPro" id="IPR001288">
    <property type="entry name" value="Translation_initiation_fac_3"/>
</dbReference>
<dbReference type="InterPro" id="IPR019815">
    <property type="entry name" value="Translation_initiation_fac_3_C"/>
</dbReference>
<dbReference type="InterPro" id="IPR019814">
    <property type="entry name" value="Translation_initiation_fac_3_N"/>
</dbReference>
<dbReference type="NCBIfam" id="TIGR00168">
    <property type="entry name" value="infC"/>
    <property type="match status" value="1"/>
</dbReference>
<dbReference type="PANTHER" id="PTHR10938">
    <property type="entry name" value="TRANSLATION INITIATION FACTOR IF-3"/>
    <property type="match status" value="1"/>
</dbReference>
<dbReference type="PANTHER" id="PTHR10938:SF0">
    <property type="entry name" value="TRANSLATION INITIATION FACTOR IF-3, MITOCHONDRIAL"/>
    <property type="match status" value="1"/>
</dbReference>
<dbReference type="Pfam" id="PF00707">
    <property type="entry name" value="IF3_C"/>
    <property type="match status" value="1"/>
</dbReference>
<dbReference type="Pfam" id="PF05198">
    <property type="entry name" value="IF3_N"/>
    <property type="match status" value="1"/>
</dbReference>
<dbReference type="SUPFAM" id="SSF55200">
    <property type="entry name" value="Translation initiation factor IF3, C-terminal domain"/>
    <property type="match status" value="1"/>
</dbReference>
<dbReference type="SUPFAM" id="SSF54364">
    <property type="entry name" value="Translation initiation factor IF3, N-terminal domain"/>
    <property type="match status" value="1"/>
</dbReference>
<dbReference type="PROSITE" id="PS00938">
    <property type="entry name" value="IF3"/>
    <property type="match status" value="1"/>
</dbReference>
<gene>
    <name evidence="1" type="primary">infC</name>
    <name type="ordered locus">tlr1620</name>
</gene>
<accession>Q8DIG8</accession>
<proteinExistence type="inferred from homology"/>
<organism>
    <name type="scientific">Thermosynechococcus vestitus (strain NIES-2133 / IAM M-273 / BP-1)</name>
    <dbReference type="NCBI Taxonomy" id="197221"/>
    <lineage>
        <taxon>Bacteria</taxon>
        <taxon>Bacillati</taxon>
        <taxon>Cyanobacteriota</taxon>
        <taxon>Cyanophyceae</taxon>
        <taxon>Acaryochloridales</taxon>
        <taxon>Thermosynechococcaceae</taxon>
        <taxon>Thermosynechococcus</taxon>
    </lineage>
</organism>
<evidence type="ECO:0000255" key="1">
    <source>
        <dbReference type="HAMAP-Rule" id="MF_00080"/>
    </source>
</evidence>
<name>IF3_THEVB</name>
<reference key="1">
    <citation type="journal article" date="2002" name="DNA Res.">
        <title>Complete genome structure of the thermophilic cyanobacterium Thermosynechococcus elongatus BP-1.</title>
        <authorList>
            <person name="Nakamura Y."/>
            <person name="Kaneko T."/>
            <person name="Sato S."/>
            <person name="Ikeuchi M."/>
            <person name="Katoh H."/>
            <person name="Sasamoto S."/>
            <person name="Watanabe A."/>
            <person name="Iriguchi M."/>
            <person name="Kawashima K."/>
            <person name="Kimura T."/>
            <person name="Kishida Y."/>
            <person name="Kiyokawa C."/>
            <person name="Kohara M."/>
            <person name="Matsumoto M."/>
            <person name="Matsuno A."/>
            <person name="Nakazaki N."/>
            <person name="Shimpo S."/>
            <person name="Sugimoto M."/>
            <person name="Takeuchi C."/>
            <person name="Yamada M."/>
            <person name="Tabata S."/>
        </authorList>
    </citation>
    <scope>NUCLEOTIDE SEQUENCE [LARGE SCALE GENOMIC DNA]</scope>
    <source>
        <strain>NIES-2133 / IAM M-273 / BP-1</strain>
    </source>
</reference>
<protein>
    <recommendedName>
        <fullName evidence="1">Translation initiation factor IF-3</fullName>
    </recommendedName>
</protein>
<keyword id="KW-0963">Cytoplasm</keyword>
<keyword id="KW-0396">Initiation factor</keyword>
<keyword id="KW-0648">Protein biosynthesis</keyword>
<keyword id="KW-1185">Reference proteome</keyword>